<feature type="chain" id="PRO_1000054758" description="Small ribosomal subunit protein uS15">
    <location>
        <begin position="1"/>
        <end position="89"/>
    </location>
</feature>
<dbReference type="EMBL" id="CP000458">
    <property type="protein sequence ID" value="ABK09005.1"/>
    <property type="molecule type" value="Genomic_DNA"/>
</dbReference>
<dbReference type="RefSeq" id="WP_006398792.1">
    <property type="nucleotide sequence ID" value="NC_008542.1"/>
</dbReference>
<dbReference type="SMR" id="A0K928"/>
<dbReference type="GeneID" id="98107299"/>
<dbReference type="KEGG" id="bch:Bcen2424_2254"/>
<dbReference type="HOGENOM" id="CLU_148518_0_0_4"/>
<dbReference type="GO" id="GO:0022627">
    <property type="term" value="C:cytosolic small ribosomal subunit"/>
    <property type="evidence" value="ECO:0007669"/>
    <property type="project" value="TreeGrafter"/>
</dbReference>
<dbReference type="GO" id="GO:0019843">
    <property type="term" value="F:rRNA binding"/>
    <property type="evidence" value="ECO:0007669"/>
    <property type="project" value="UniProtKB-UniRule"/>
</dbReference>
<dbReference type="GO" id="GO:0003735">
    <property type="term" value="F:structural constituent of ribosome"/>
    <property type="evidence" value="ECO:0007669"/>
    <property type="project" value="InterPro"/>
</dbReference>
<dbReference type="GO" id="GO:0006412">
    <property type="term" value="P:translation"/>
    <property type="evidence" value="ECO:0007669"/>
    <property type="project" value="UniProtKB-UniRule"/>
</dbReference>
<dbReference type="CDD" id="cd00353">
    <property type="entry name" value="Ribosomal_S15p_S13e"/>
    <property type="match status" value="1"/>
</dbReference>
<dbReference type="FunFam" id="1.10.287.10:FF:000002">
    <property type="entry name" value="30S ribosomal protein S15"/>
    <property type="match status" value="1"/>
</dbReference>
<dbReference type="Gene3D" id="6.10.250.3130">
    <property type="match status" value="1"/>
</dbReference>
<dbReference type="Gene3D" id="1.10.287.10">
    <property type="entry name" value="S15/NS1, RNA-binding"/>
    <property type="match status" value="1"/>
</dbReference>
<dbReference type="HAMAP" id="MF_01343_B">
    <property type="entry name" value="Ribosomal_uS15_B"/>
    <property type="match status" value="1"/>
</dbReference>
<dbReference type="InterPro" id="IPR000589">
    <property type="entry name" value="Ribosomal_uS15"/>
</dbReference>
<dbReference type="InterPro" id="IPR005290">
    <property type="entry name" value="Ribosomal_uS15_bac-type"/>
</dbReference>
<dbReference type="InterPro" id="IPR009068">
    <property type="entry name" value="uS15_NS1_RNA-bd_sf"/>
</dbReference>
<dbReference type="NCBIfam" id="TIGR00952">
    <property type="entry name" value="S15_bact"/>
    <property type="match status" value="1"/>
</dbReference>
<dbReference type="PANTHER" id="PTHR23321">
    <property type="entry name" value="RIBOSOMAL PROTEIN S15, BACTERIAL AND ORGANELLAR"/>
    <property type="match status" value="1"/>
</dbReference>
<dbReference type="PANTHER" id="PTHR23321:SF26">
    <property type="entry name" value="SMALL RIBOSOMAL SUBUNIT PROTEIN US15M"/>
    <property type="match status" value="1"/>
</dbReference>
<dbReference type="Pfam" id="PF00312">
    <property type="entry name" value="Ribosomal_S15"/>
    <property type="match status" value="1"/>
</dbReference>
<dbReference type="SMART" id="SM01387">
    <property type="entry name" value="Ribosomal_S15"/>
    <property type="match status" value="1"/>
</dbReference>
<dbReference type="SUPFAM" id="SSF47060">
    <property type="entry name" value="S15/NS1 RNA-binding domain"/>
    <property type="match status" value="1"/>
</dbReference>
<dbReference type="PROSITE" id="PS00362">
    <property type="entry name" value="RIBOSOMAL_S15"/>
    <property type="match status" value="1"/>
</dbReference>
<name>RS15_BURCH</name>
<comment type="function">
    <text evidence="1">One of the primary rRNA binding proteins, it binds directly to 16S rRNA where it helps nucleate assembly of the platform of the 30S subunit by binding and bridging several RNA helices of the 16S rRNA.</text>
</comment>
<comment type="function">
    <text evidence="1">Forms an intersubunit bridge (bridge B4) with the 23S rRNA of the 50S subunit in the ribosome.</text>
</comment>
<comment type="subunit">
    <text evidence="1">Part of the 30S ribosomal subunit. Forms a bridge to the 50S subunit in the 70S ribosome, contacting the 23S rRNA.</text>
</comment>
<comment type="similarity">
    <text evidence="1">Belongs to the universal ribosomal protein uS15 family.</text>
</comment>
<evidence type="ECO:0000255" key="1">
    <source>
        <dbReference type="HAMAP-Rule" id="MF_01343"/>
    </source>
</evidence>
<evidence type="ECO:0000305" key="2"/>
<gene>
    <name evidence="1" type="primary">rpsO</name>
    <name type="ordered locus">Bcen2424_2254</name>
</gene>
<sequence>MSVADIKKSEVVAQFARGTNDTGSPEVQVALLTARIVELTGHFKTHAKDHHSRRGLLRMVSRRRKLLDYLKGKDADRYRALIEKLGLRK</sequence>
<keyword id="KW-0687">Ribonucleoprotein</keyword>
<keyword id="KW-0689">Ribosomal protein</keyword>
<keyword id="KW-0694">RNA-binding</keyword>
<keyword id="KW-0699">rRNA-binding</keyword>
<organism>
    <name type="scientific">Burkholderia cenocepacia (strain HI2424)</name>
    <dbReference type="NCBI Taxonomy" id="331272"/>
    <lineage>
        <taxon>Bacteria</taxon>
        <taxon>Pseudomonadati</taxon>
        <taxon>Pseudomonadota</taxon>
        <taxon>Betaproteobacteria</taxon>
        <taxon>Burkholderiales</taxon>
        <taxon>Burkholderiaceae</taxon>
        <taxon>Burkholderia</taxon>
        <taxon>Burkholderia cepacia complex</taxon>
    </lineage>
</organism>
<reference key="1">
    <citation type="submission" date="2006-08" db="EMBL/GenBank/DDBJ databases">
        <title>Complete sequence of chromosome 1 of Burkholderia cenocepacia HI2424.</title>
        <authorList>
            <person name="Copeland A."/>
            <person name="Lucas S."/>
            <person name="Lapidus A."/>
            <person name="Barry K."/>
            <person name="Detter J.C."/>
            <person name="Glavina del Rio T."/>
            <person name="Hammon N."/>
            <person name="Israni S."/>
            <person name="Pitluck S."/>
            <person name="Chain P."/>
            <person name="Malfatti S."/>
            <person name="Shin M."/>
            <person name="Vergez L."/>
            <person name="Schmutz J."/>
            <person name="Larimer F."/>
            <person name="Land M."/>
            <person name="Hauser L."/>
            <person name="Kyrpides N."/>
            <person name="Kim E."/>
            <person name="LiPuma J.J."/>
            <person name="Gonzalez C.F."/>
            <person name="Konstantinidis K."/>
            <person name="Tiedje J.M."/>
            <person name="Richardson P."/>
        </authorList>
    </citation>
    <scope>NUCLEOTIDE SEQUENCE [LARGE SCALE GENOMIC DNA]</scope>
    <source>
        <strain>HI2424</strain>
    </source>
</reference>
<proteinExistence type="inferred from homology"/>
<accession>A0K928</accession>
<protein>
    <recommendedName>
        <fullName evidence="1">Small ribosomal subunit protein uS15</fullName>
    </recommendedName>
    <alternativeName>
        <fullName evidence="2">30S ribosomal protein S15</fullName>
    </alternativeName>
</protein>